<feature type="chain" id="PRO_0000356625" description="Large ribosomal subunit protein bL33">
    <location>
        <begin position="1"/>
        <end position="55"/>
    </location>
</feature>
<accession>Q1MII4</accession>
<sequence length="55" mass="6316">MAKATTIKIKLLSTADTGFFYVTTKNSRTMTDKMTKTKYDPVAKKHVEFKETKIK</sequence>
<gene>
    <name evidence="1" type="primary">rpmG</name>
    <name type="ordered locus">RL1731</name>
</gene>
<evidence type="ECO:0000255" key="1">
    <source>
        <dbReference type="HAMAP-Rule" id="MF_00294"/>
    </source>
</evidence>
<evidence type="ECO:0000305" key="2"/>
<proteinExistence type="inferred from homology"/>
<dbReference type="EMBL" id="AM236080">
    <property type="protein sequence ID" value="CAK07226.1"/>
    <property type="molecule type" value="Genomic_DNA"/>
</dbReference>
<dbReference type="RefSeq" id="WP_003547442.1">
    <property type="nucleotide sequence ID" value="NC_008380.1"/>
</dbReference>
<dbReference type="SMR" id="Q1MII4"/>
<dbReference type="EnsemblBacteria" id="CAK07226">
    <property type="protein sequence ID" value="CAK07226"/>
    <property type="gene ID" value="RL1731"/>
</dbReference>
<dbReference type="GeneID" id="86848095"/>
<dbReference type="KEGG" id="rle:RL1731"/>
<dbReference type="eggNOG" id="COG0267">
    <property type="taxonomic scope" value="Bacteria"/>
</dbReference>
<dbReference type="HOGENOM" id="CLU_190949_1_1_5"/>
<dbReference type="Proteomes" id="UP000006575">
    <property type="component" value="Chromosome"/>
</dbReference>
<dbReference type="GO" id="GO:0022625">
    <property type="term" value="C:cytosolic large ribosomal subunit"/>
    <property type="evidence" value="ECO:0007669"/>
    <property type="project" value="TreeGrafter"/>
</dbReference>
<dbReference type="GO" id="GO:0003735">
    <property type="term" value="F:structural constituent of ribosome"/>
    <property type="evidence" value="ECO:0007669"/>
    <property type="project" value="InterPro"/>
</dbReference>
<dbReference type="GO" id="GO:0006412">
    <property type="term" value="P:translation"/>
    <property type="evidence" value="ECO:0007669"/>
    <property type="project" value="UniProtKB-UniRule"/>
</dbReference>
<dbReference type="Gene3D" id="2.20.28.120">
    <property type="entry name" value="Ribosomal protein L33"/>
    <property type="match status" value="1"/>
</dbReference>
<dbReference type="HAMAP" id="MF_00294">
    <property type="entry name" value="Ribosomal_bL33"/>
    <property type="match status" value="1"/>
</dbReference>
<dbReference type="InterPro" id="IPR001705">
    <property type="entry name" value="Ribosomal_bL33"/>
</dbReference>
<dbReference type="InterPro" id="IPR018264">
    <property type="entry name" value="Ribosomal_bL33_CS"/>
</dbReference>
<dbReference type="InterPro" id="IPR038584">
    <property type="entry name" value="Ribosomal_bL33_sf"/>
</dbReference>
<dbReference type="InterPro" id="IPR011332">
    <property type="entry name" value="Ribosomal_zn-bd"/>
</dbReference>
<dbReference type="NCBIfam" id="NF001860">
    <property type="entry name" value="PRK00595.1"/>
    <property type="match status" value="1"/>
</dbReference>
<dbReference type="NCBIfam" id="TIGR01023">
    <property type="entry name" value="rpmG_bact"/>
    <property type="match status" value="1"/>
</dbReference>
<dbReference type="PANTHER" id="PTHR15238">
    <property type="entry name" value="54S RIBOSOMAL PROTEIN L39, MITOCHONDRIAL"/>
    <property type="match status" value="1"/>
</dbReference>
<dbReference type="PANTHER" id="PTHR15238:SF1">
    <property type="entry name" value="LARGE RIBOSOMAL SUBUNIT PROTEIN BL33M"/>
    <property type="match status" value="1"/>
</dbReference>
<dbReference type="Pfam" id="PF00471">
    <property type="entry name" value="Ribosomal_L33"/>
    <property type="match status" value="1"/>
</dbReference>
<dbReference type="SUPFAM" id="SSF57829">
    <property type="entry name" value="Zn-binding ribosomal proteins"/>
    <property type="match status" value="1"/>
</dbReference>
<dbReference type="PROSITE" id="PS00582">
    <property type="entry name" value="RIBOSOMAL_L33"/>
    <property type="match status" value="1"/>
</dbReference>
<organism>
    <name type="scientific">Rhizobium johnstonii (strain DSM 114642 / LMG 32736 / 3841)</name>
    <name type="common">Rhizobium leguminosarum bv. viciae</name>
    <dbReference type="NCBI Taxonomy" id="216596"/>
    <lineage>
        <taxon>Bacteria</taxon>
        <taxon>Pseudomonadati</taxon>
        <taxon>Pseudomonadota</taxon>
        <taxon>Alphaproteobacteria</taxon>
        <taxon>Hyphomicrobiales</taxon>
        <taxon>Rhizobiaceae</taxon>
        <taxon>Rhizobium/Agrobacterium group</taxon>
        <taxon>Rhizobium</taxon>
        <taxon>Rhizobium johnstonii</taxon>
    </lineage>
</organism>
<comment type="similarity">
    <text evidence="1">Belongs to the bacterial ribosomal protein bL33 family.</text>
</comment>
<name>RL33_RHIJ3</name>
<keyword id="KW-0687">Ribonucleoprotein</keyword>
<keyword id="KW-0689">Ribosomal protein</keyword>
<protein>
    <recommendedName>
        <fullName evidence="1">Large ribosomal subunit protein bL33</fullName>
    </recommendedName>
    <alternativeName>
        <fullName evidence="2">50S ribosomal protein L33</fullName>
    </alternativeName>
</protein>
<reference key="1">
    <citation type="journal article" date="2006" name="Genome Biol.">
        <title>The genome of Rhizobium leguminosarum has recognizable core and accessory components.</title>
        <authorList>
            <person name="Young J.P.W."/>
            <person name="Crossman L.C."/>
            <person name="Johnston A.W.B."/>
            <person name="Thomson N.R."/>
            <person name="Ghazoui Z.F."/>
            <person name="Hull K.H."/>
            <person name="Wexler M."/>
            <person name="Curson A.R.J."/>
            <person name="Todd J.D."/>
            <person name="Poole P.S."/>
            <person name="Mauchline T.H."/>
            <person name="East A.K."/>
            <person name="Quail M.A."/>
            <person name="Churcher C."/>
            <person name="Arrowsmith C."/>
            <person name="Cherevach I."/>
            <person name="Chillingworth T."/>
            <person name="Clarke K."/>
            <person name="Cronin A."/>
            <person name="Davis P."/>
            <person name="Fraser A."/>
            <person name="Hance Z."/>
            <person name="Hauser H."/>
            <person name="Jagels K."/>
            <person name="Moule S."/>
            <person name="Mungall K."/>
            <person name="Norbertczak H."/>
            <person name="Rabbinowitsch E."/>
            <person name="Sanders M."/>
            <person name="Simmonds M."/>
            <person name="Whitehead S."/>
            <person name="Parkhill J."/>
        </authorList>
    </citation>
    <scope>NUCLEOTIDE SEQUENCE [LARGE SCALE GENOMIC DNA]</scope>
    <source>
        <strain>DSM 114642 / LMG 32736 / 3841</strain>
    </source>
</reference>